<proteinExistence type="inferred from homology"/>
<reference key="1">
    <citation type="journal article" date="2009" name="J. Bacteriol.">
        <title>Complete and draft genome sequences of six members of the Aquificales.</title>
        <authorList>
            <person name="Reysenbach A.-L."/>
            <person name="Hamamura N."/>
            <person name="Podar M."/>
            <person name="Griffiths E."/>
            <person name="Ferreira S."/>
            <person name="Hochstein R."/>
            <person name="Heidelberg J."/>
            <person name="Johnson J."/>
            <person name="Mead D."/>
            <person name="Pohorille A."/>
            <person name="Sarmiento M."/>
            <person name="Schweighofer K."/>
            <person name="Seshadri R."/>
            <person name="Voytek M.A."/>
        </authorList>
    </citation>
    <scope>NUCLEOTIDE SEQUENCE [LARGE SCALE GENOMIC DNA]</scope>
    <source>
        <strain>Y04AAS1</strain>
    </source>
</reference>
<name>AROD_HYDS0</name>
<accession>B4U701</accession>
<keyword id="KW-0028">Amino-acid biosynthesis</keyword>
<keyword id="KW-0057">Aromatic amino acid biosynthesis</keyword>
<keyword id="KW-0456">Lyase</keyword>
<keyword id="KW-0704">Schiff base</keyword>
<feature type="chain" id="PRO_1000099908" description="3-dehydroquinate dehydratase">
    <location>
        <begin position="1"/>
        <end position="217"/>
    </location>
</feature>
<feature type="active site" description="Proton donor/acceptor" evidence="1">
    <location>
        <position position="114"/>
    </location>
</feature>
<feature type="active site" description="Schiff-base intermediate with substrate" evidence="1">
    <location>
        <position position="140"/>
    </location>
</feature>
<feature type="binding site" evidence="1">
    <location>
        <begin position="26"/>
        <end position="28"/>
    </location>
    <ligand>
        <name>3-dehydroquinate</name>
        <dbReference type="ChEBI" id="CHEBI:32364"/>
    </ligand>
</feature>
<feature type="binding site" evidence="1">
    <location>
        <position position="59"/>
    </location>
    <ligand>
        <name>3-dehydroquinate</name>
        <dbReference type="ChEBI" id="CHEBI:32364"/>
    </ligand>
</feature>
<feature type="binding site" evidence="1">
    <location>
        <position position="178"/>
    </location>
    <ligand>
        <name>3-dehydroquinate</name>
        <dbReference type="ChEBI" id="CHEBI:32364"/>
    </ligand>
</feature>
<feature type="binding site" evidence="1">
    <location>
        <position position="201"/>
    </location>
    <ligand>
        <name>3-dehydroquinate</name>
        <dbReference type="ChEBI" id="CHEBI:32364"/>
    </ligand>
</feature>
<organism>
    <name type="scientific">Hydrogenobaculum sp. (strain Y04AAS1)</name>
    <dbReference type="NCBI Taxonomy" id="380749"/>
    <lineage>
        <taxon>Bacteria</taxon>
        <taxon>Pseudomonadati</taxon>
        <taxon>Aquificota</taxon>
        <taxon>Aquificia</taxon>
        <taxon>Aquificales</taxon>
        <taxon>Aquificaceae</taxon>
        <taxon>Hydrogenobaculum</taxon>
    </lineage>
</organism>
<evidence type="ECO:0000255" key="1">
    <source>
        <dbReference type="HAMAP-Rule" id="MF_00214"/>
    </source>
</evidence>
<comment type="function">
    <text evidence="1">Involved in the third step of the chorismate pathway, which leads to the biosynthesis of aromatic amino acids. Catalyzes the cis-dehydration of 3-dehydroquinate (DHQ) and introduces the first double bond of the aromatic ring to yield 3-dehydroshikimate.</text>
</comment>
<comment type="catalytic activity">
    <reaction evidence="1">
        <text>3-dehydroquinate = 3-dehydroshikimate + H2O</text>
        <dbReference type="Rhea" id="RHEA:21096"/>
        <dbReference type="ChEBI" id="CHEBI:15377"/>
        <dbReference type="ChEBI" id="CHEBI:16630"/>
        <dbReference type="ChEBI" id="CHEBI:32364"/>
        <dbReference type="EC" id="4.2.1.10"/>
    </reaction>
</comment>
<comment type="pathway">
    <text evidence="1">Metabolic intermediate biosynthesis; chorismate biosynthesis; chorismate from D-erythrose 4-phosphate and phosphoenolpyruvate: step 3/7.</text>
</comment>
<comment type="subunit">
    <text evidence="1">Homodimer.</text>
</comment>
<comment type="similarity">
    <text evidence="1">Belongs to the type-I 3-dehydroquinase family.</text>
</comment>
<sequence length="217" mass="24817">MKIAIPITDENFDEVLLKARNADILEFRVDSFTNKDISFVSGLLKKAKENGFETILTIRSEKEGGAYVENRVEMFEKLMPLSDYTDIELSSTDIIAYISRLSKEYNKKLIVSYHNFEMTPANFVIKETIREALRYGDIPKIALKANSYEDVARLMCSAIDIKTPKILISMGEFGKISRIAGFIFGSFISYAYLEKPNAPGQLSLEEMLKLKEMFYLR</sequence>
<dbReference type="EC" id="4.2.1.10" evidence="1"/>
<dbReference type="EMBL" id="CP001130">
    <property type="protein sequence ID" value="ACG56912.1"/>
    <property type="molecule type" value="Genomic_DNA"/>
</dbReference>
<dbReference type="RefSeq" id="WP_012513269.1">
    <property type="nucleotide sequence ID" value="NC_011126.1"/>
</dbReference>
<dbReference type="SMR" id="B4U701"/>
<dbReference type="STRING" id="380749.HY04AAS1_0220"/>
<dbReference type="KEGG" id="hya:HY04AAS1_0220"/>
<dbReference type="eggNOG" id="COG0710">
    <property type="taxonomic scope" value="Bacteria"/>
</dbReference>
<dbReference type="HOGENOM" id="CLU_064444_2_1_0"/>
<dbReference type="OrthoDB" id="9813659at2"/>
<dbReference type="UniPathway" id="UPA00053">
    <property type="reaction ID" value="UER00086"/>
</dbReference>
<dbReference type="GO" id="GO:0003855">
    <property type="term" value="F:3-dehydroquinate dehydratase activity"/>
    <property type="evidence" value="ECO:0007669"/>
    <property type="project" value="UniProtKB-UniRule"/>
</dbReference>
<dbReference type="GO" id="GO:0046279">
    <property type="term" value="P:3,4-dihydroxybenzoate biosynthetic process"/>
    <property type="evidence" value="ECO:0007669"/>
    <property type="project" value="TreeGrafter"/>
</dbReference>
<dbReference type="GO" id="GO:0008652">
    <property type="term" value="P:amino acid biosynthetic process"/>
    <property type="evidence" value="ECO:0007669"/>
    <property type="project" value="UniProtKB-KW"/>
</dbReference>
<dbReference type="GO" id="GO:0009073">
    <property type="term" value="P:aromatic amino acid family biosynthetic process"/>
    <property type="evidence" value="ECO:0007669"/>
    <property type="project" value="UniProtKB-KW"/>
</dbReference>
<dbReference type="GO" id="GO:0009423">
    <property type="term" value="P:chorismate biosynthetic process"/>
    <property type="evidence" value="ECO:0007669"/>
    <property type="project" value="UniProtKB-UniRule"/>
</dbReference>
<dbReference type="CDD" id="cd00502">
    <property type="entry name" value="DHQase_I"/>
    <property type="match status" value="1"/>
</dbReference>
<dbReference type="Gene3D" id="3.20.20.70">
    <property type="entry name" value="Aldolase class I"/>
    <property type="match status" value="1"/>
</dbReference>
<dbReference type="HAMAP" id="MF_00214">
    <property type="entry name" value="AroD"/>
    <property type="match status" value="1"/>
</dbReference>
<dbReference type="InterPro" id="IPR018508">
    <property type="entry name" value="3-dehydroquinate_DH_AS"/>
</dbReference>
<dbReference type="InterPro" id="IPR013785">
    <property type="entry name" value="Aldolase_TIM"/>
</dbReference>
<dbReference type="InterPro" id="IPR001381">
    <property type="entry name" value="DHquinase_I"/>
</dbReference>
<dbReference type="InterPro" id="IPR050146">
    <property type="entry name" value="Type-I_3-dehydroquinase"/>
</dbReference>
<dbReference type="NCBIfam" id="TIGR01093">
    <property type="entry name" value="aroD"/>
    <property type="match status" value="1"/>
</dbReference>
<dbReference type="PANTHER" id="PTHR43699">
    <property type="entry name" value="3-DEHYDROQUINATE DEHYDRATASE"/>
    <property type="match status" value="1"/>
</dbReference>
<dbReference type="PANTHER" id="PTHR43699:SF1">
    <property type="entry name" value="3-DEHYDROQUINATE DEHYDRATASE"/>
    <property type="match status" value="1"/>
</dbReference>
<dbReference type="Pfam" id="PF01487">
    <property type="entry name" value="DHquinase_I"/>
    <property type="match status" value="1"/>
</dbReference>
<dbReference type="SUPFAM" id="SSF51569">
    <property type="entry name" value="Aldolase"/>
    <property type="match status" value="1"/>
</dbReference>
<dbReference type="PROSITE" id="PS01028">
    <property type="entry name" value="DEHYDROQUINASE_I"/>
    <property type="match status" value="1"/>
</dbReference>
<protein>
    <recommendedName>
        <fullName evidence="1">3-dehydroquinate dehydratase</fullName>
        <shortName evidence="1">3-dehydroquinase</shortName>
        <ecNumber evidence="1">4.2.1.10</ecNumber>
    </recommendedName>
    <alternativeName>
        <fullName evidence="1">Type I DHQase</fullName>
    </alternativeName>
    <alternativeName>
        <fullName evidence="1">Type I dehydroquinase</fullName>
        <shortName evidence="1">DHQ1</shortName>
    </alternativeName>
</protein>
<gene>
    <name evidence="1" type="primary">aroD</name>
    <name type="ordered locus">HY04AAS1_0220</name>
</gene>